<evidence type="ECO:0000250" key="1">
    <source>
        <dbReference type="UniProtKB" id="Q9NVP2"/>
    </source>
</evidence>
<evidence type="ECO:0000250" key="2">
    <source>
        <dbReference type="UniProtKB" id="Q9Y294"/>
    </source>
</evidence>
<evidence type="ECO:0000269" key="3">
    <source>
    </source>
</evidence>
<evidence type="ECO:0000269" key="4">
    <source>
    </source>
</evidence>
<evidence type="ECO:0000269" key="5">
    <source>
    </source>
</evidence>
<evidence type="ECO:0000303" key="6">
    <source>
    </source>
</evidence>
<evidence type="ECO:0000305" key="7"/>
<evidence type="ECO:0000312" key="8">
    <source>
        <dbReference type="MGI" id="MGI:1914179"/>
    </source>
</evidence>
<feature type="chain" id="PRO_0000284016" description="Histone chaperone ASF1B">
    <location>
        <begin position="1"/>
        <end position="202"/>
    </location>
</feature>
<feature type="region of interest" description="Interaction with histone H3 and CHAF1B" evidence="2">
    <location>
        <begin position="1"/>
        <end position="156"/>
    </location>
</feature>
<feature type="modified residue" description="Phosphoserine; by TLK2" evidence="1">
    <location>
        <position position="198"/>
    </location>
</feature>
<feature type="sequence conflict" description="In Ref. 1; BAC36978." evidence="7" ref="1">
    <original>T</original>
    <variation>N</variation>
    <location>
        <position position="93"/>
    </location>
</feature>
<feature type="sequence conflict" description="In Ref. 1; BAC36978." evidence="7" ref="1">
    <original>N</original>
    <variation>K</variation>
    <location>
        <position position="155"/>
    </location>
</feature>
<organism>
    <name type="scientific">Mus musculus</name>
    <name type="common">Mouse</name>
    <dbReference type="NCBI Taxonomy" id="10090"/>
    <lineage>
        <taxon>Eukaryota</taxon>
        <taxon>Metazoa</taxon>
        <taxon>Chordata</taxon>
        <taxon>Craniata</taxon>
        <taxon>Vertebrata</taxon>
        <taxon>Euteleostomi</taxon>
        <taxon>Mammalia</taxon>
        <taxon>Eutheria</taxon>
        <taxon>Euarchontoglires</taxon>
        <taxon>Glires</taxon>
        <taxon>Rodentia</taxon>
        <taxon>Myomorpha</taxon>
        <taxon>Muroidea</taxon>
        <taxon>Muridae</taxon>
        <taxon>Murinae</taxon>
        <taxon>Mus</taxon>
        <taxon>Mus</taxon>
    </lineage>
</organism>
<proteinExistence type="evidence at protein level"/>
<dbReference type="EMBL" id="AK005646">
    <property type="protein sequence ID" value="BAB24166.1"/>
    <property type="molecule type" value="mRNA"/>
</dbReference>
<dbReference type="EMBL" id="AK019594">
    <property type="protein sequence ID" value="BAB31809.1"/>
    <property type="molecule type" value="mRNA"/>
</dbReference>
<dbReference type="EMBL" id="AK077005">
    <property type="protein sequence ID" value="BAC36561.1"/>
    <property type="molecule type" value="mRNA"/>
</dbReference>
<dbReference type="EMBL" id="AK077718">
    <property type="protein sequence ID" value="BAC36978.1"/>
    <property type="molecule type" value="mRNA"/>
</dbReference>
<dbReference type="EMBL" id="AK134906">
    <property type="protein sequence ID" value="BAE22334.1"/>
    <property type="molecule type" value="mRNA"/>
</dbReference>
<dbReference type="EMBL" id="AK150818">
    <property type="protein sequence ID" value="BAE29881.1"/>
    <property type="molecule type" value="mRNA"/>
</dbReference>
<dbReference type="EMBL" id="AK151951">
    <property type="protein sequence ID" value="BAE30824.1"/>
    <property type="molecule type" value="mRNA"/>
</dbReference>
<dbReference type="EMBL" id="AK165322">
    <property type="protein sequence ID" value="BAE38137.1"/>
    <property type="molecule type" value="mRNA"/>
</dbReference>
<dbReference type="EMBL" id="BC003428">
    <property type="protein sequence ID" value="AAH03428.1"/>
    <property type="molecule type" value="mRNA"/>
</dbReference>
<dbReference type="CCDS" id="CCDS22462.1"/>
<dbReference type="RefSeq" id="NP_077146.1">
    <property type="nucleotide sequence ID" value="NM_024184.2"/>
</dbReference>
<dbReference type="SMR" id="Q9DAP7"/>
<dbReference type="BioGRID" id="211816">
    <property type="interactions" value="1"/>
</dbReference>
<dbReference type="FunCoup" id="Q9DAP7">
    <property type="interactions" value="2417"/>
</dbReference>
<dbReference type="IntAct" id="Q9DAP7">
    <property type="interactions" value="5"/>
</dbReference>
<dbReference type="MINT" id="Q9DAP7"/>
<dbReference type="STRING" id="10090.ENSMUSP00000005607"/>
<dbReference type="iPTMnet" id="Q9DAP7"/>
<dbReference type="PhosphoSitePlus" id="Q9DAP7"/>
<dbReference type="SwissPalm" id="Q9DAP7"/>
<dbReference type="jPOST" id="Q9DAP7"/>
<dbReference type="PaxDb" id="10090-ENSMUSP00000005607"/>
<dbReference type="PeptideAtlas" id="Q9DAP7"/>
<dbReference type="ProteomicsDB" id="281918"/>
<dbReference type="Pumba" id="Q9DAP7"/>
<dbReference type="Antibodypedia" id="26631">
    <property type="antibodies" value="328 antibodies from 30 providers"/>
</dbReference>
<dbReference type="DNASU" id="66929"/>
<dbReference type="Ensembl" id="ENSMUST00000005607.9">
    <property type="protein sequence ID" value="ENSMUSP00000005607.9"/>
    <property type="gene ID" value="ENSMUSG00000005470.9"/>
</dbReference>
<dbReference type="GeneID" id="66929"/>
<dbReference type="KEGG" id="mmu:66929"/>
<dbReference type="UCSC" id="uc009mlk.1">
    <property type="organism name" value="mouse"/>
</dbReference>
<dbReference type="AGR" id="MGI:1914179"/>
<dbReference type="CTD" id="55723"/>
<dbReference type="MGI" id="MGI:1914179">
    <property type="gene designation" value="Asf1b"/>
</dbReference>
<dbReference type="VEuPathDB" id="HostDB:ENSMUSG00000005470"/>
<dbReference type="eggNOG" id="KOG3265">
    <property type="taxonomic scope" value="Eukaryota"/>
</dbReference>
<dbReference type="GeneTree" id="ENSGT00390000004692"/>
<dbReference type="HOGENOM" id="CLU_060354_1_2_1"/>
<dbReference type="InParanoid" id="Q9DAP7"/>
<dbReference type="OMA" id="HINWDSN"/>
<dbReference type="OrthoDB" id="29755at2759"/>
<dbReference type="PhylomeDB" id="Q9DAP7"/>
<dbReference type="TreeFam" id="TF106429"/>
<dbReference type="BioGRID-ORCS" id="66929">
    <property type="hits" value="4 hits in 81 CRISPR screens"/>
</dbReference>
<dbReference type="ChiTaRS" id="Asf1b">
    <property type="organism name" value="mouse"/>
</dbReference>
<dbReference type="PRO" id="PR:Q9DAP7"/>
<dbReference type="Proteomes" id="UP000000589">
    <property type="component" value="Chromosome 8"/>
</dbReference>
<dbReference type="RNAct" id="Q9DAP7">
    <property type="molecule type" value="protein"/>
</dbReference>
<dbReference type="Bgee" id="ENSMUSG00000005470">
    <property type="expression patterns" value="Expressed in fetal liver hematopoietic progenitor cell and 205 other cell types or tissues"/>
</dbReference>
<dbReference type="GO" id="GO:0000785">
    <property type="term" value="C:chromatin"/>
    <property type="evidence" value="ECO:0000314"/>
    <property type="project" value="MGI"/>
</dbReference>
<dbReference type="GO" id="GO:0005829">
    <property type="term" value="C:cytosol"/>
    <property type="evidence" value="ECO:0007669"/>
    <property type="project" value="UniProtKB-SubCell"/>
</dbReference>
<dbReference type="GO" id="GO:0005654">
    <property type="term" value="C:nucleoplasm"/>
    <property type="evidence" value="ECO:0007669"/>
    <property type="project" value="Ensembl"/>
</dbReference>
<dbReference type="GO" id="GO:0032991">
    <property type="term" value="C:protein-containing complex"/>
    <property type="evidence" value="ECO:0007669"/>
    <property type="project" value="Ensembl"/>
</dbReference>
<dbReference type="GO" id="GO:0042393">
    <property type="term" value="F:histone binding"/>
    <property type="evidence" value="ECO:0000314"/>
    <property type="project" value="MGI"/>
</dbReference>
<dbReference type="GO" id="GO:0140713">
    <property type="term" value="F:histone chaperone activity"/>
    <property type="evidence" value="ECO:0000314"/>
    <property type="project" value="UniProtKB"/>
</dbReference>
<dbReference type="GO" id="GO:0001835">
    <property type="term" value="P:blastocyst hatching"/>
    <property type="evidence" value="ECO:0000315"/>
    <property type="project" value="MGI"/>
</dbReference>
<dbReference type="GO" id="GO:0006334">
    <property type="term" value="P:nucleosome assembly"/>
    <property type="evidence" value="ECO:0000314"/>
    <property type="project" value="MGI"/>
</dbReference>
<dbReference type="FunFam" id="2.60.40.1490:FF:000001">
    <property type="entry name" value="Histone chaperone ASF1"/>
    <property type="match status" value="1"/>
</dbReference>
<dbReference type="Gene3D" id="2.60.40.1490">
    <property type="entry name" value="Histone chaperone ASF1-like"/>
    <property type="match status" value="1"/>
</dbReference>
<dbReference type="InterPro" id="IPR006818">
    <property type="entry name" value="ASF1-like"/>
</dbReference>
<dbReference type="InterPro" id="IPR036747">
    <property type="entry name" value="ASF1-like_sf"/>
</dbReference>
<dbReference type="PANTHER" id="PTHR12040">
    <property type="entry name" value="ANTI-SILENCING PROTEIN 1"/>
    <property type="match status" value="1"/>
</dbReference>
<dbReference type="PANTHER" id="PTHR12040:SF22">
    <property type="entry name" value="HISTONE CHAPERONE ASF1B"/>
    <property type="match status" value="1"/>
</dbReference>
<dbReference type="Pfam" id="PF04729">
    <property type="entry name" value="ASF1_hist_chap"/>
    <property type="match status" value="1"/>
</dbReference>
<dbReference type="SUPFAM" id="SSF101546">
    <property type="entry name" value="ASF1-like"/>
    <property type="match status" value="1"/>
</dbReference>
<comment type="function">
    <text evidence="1 3 4 5">Histone chaperone that facilitates histone deposition and histone exchange and removal during nucleosome assembly and disassembly (PubMed:12842904, PubMed:17054786). Cooperates with chromatin assembly factor 1 (CAF-1) to promote replication-dependent chromatin assembly (By similarity). Also involved in the nuclear import of the histone H3-H4 dimer together with importin-4 (IPO4): specifically recognizes and binds newly synthesized histones with the monomethylation of H3 'Lys-9' (H3K9me1) and diacetylation at 'Lys-5' and 'Lys-12' of H4 (H4K5ac and H4K12ac) marks in the cytosol (By similarity). Does not participate in replication-independent nucleosome deposition which is mediated by ASF1A and HIRA (By similarity). Required for gonad development (PubMed:26850882).</text>
</comment>
<comment type="subunit">
    <text evidence="1">Interacts with histone H3 (via C-terminus), including histone H3.1, H3.2 and H3.3, and histone H4; the interaction with H3 is direct (By similarity). Interacts with the CHAF1A, CHAF1B and RBBP4 subunits of the CAF-1 complex (By similarity). Interacts with HAT1, NASP and TAF1 (By similarity). Found in a soluble complex with NASP and histones H3 and H4; the interaction with NASP is probably indirect and mediated by H3-H4 (By similarity). Interacts with CDAN1 (By similarity). Found in a cytosolic complex with CDAN1, ASF1A, IPO4 and histones H3.1 and H4 (By similarity). Interacts with CREBBP (By similarity).</text>
</comment>
<comment type="subcellular location">
    <subcellularLocation>
        <location evidence="1">Nucleus</location>
    </subcellularLocation>
    <subcellularLocation>
        <location evidence="1">Cytoplasm</location>
        <location evidence="1">Cytosol</location>
    </subcellularLocation>
</comment>
<comment type="tissue specificity">
    <text evidence="3 5">Highly expressed in germ cells (PubMed:26850882). Restricted to premeiotic to meiotic stages during spermatogenesis (PubMed:12842904).</text>
</comment>
<comment type="developmental stage">
    <text evidence="5">Expressed in early embryos and germ cells.</text>
</comment>
<comment type="PTM">
    <text evidence="1 4">Phosphorylated by TLK2 (By similarity). Phosphorylated by TLK1 (PubMed:17054786).</text>
</comment>
<comment type="disruption phenotype">
    <text evidence="5">Mice are viable but display subfertility caused by altered gamete formation (PubMed:26850882). The timing of meiotic entry and the subsequent gonad development is more severely impaired in female than in male mice (PubMed:26850882). Increased perinatal lethality is also increased in the offspring of knockout females (PubMed:26850882).</text>
</comment>
<comment type="similarity">
    <text evidence="7">Belongs to the ASF1 family.</text>
</comment>
<reference key="1">
    <citation type="journal article" date="2005" name="Science">
        <title>The transcriptional landscape of the mammalian genome.</title>
        <authorList>
            <person name="Carninci P."/>
            <person name="Kasukawa T."/>
            <person name="Katayama S."/>
            <person name="Gough J."/>
            <person name="Frith M.C."/>
            <person name="Maeda N."/>
            <person name="Oyama R."/>
            <person name="Ravasi T."/>
            <person name="Lenhard B."/>
            <person name="Wells C."/>
            <person name="Kodzius R."/>
            <person name="Shimokawa K."/>
            <person name="Bajic V.B."/>
            <person name="Brenner S.E."/>
            <person name="Batalov S."/>
            <person name="Forrest A.R."/>
            <person name="Zavolan M."/>
            <person name="Davis M.J."/>
            <person name="Wilming L.G."/>
            <person name="Aidinis V."/>
            <person name="Allen J.E."/>
            <person name="Ambesi-Impiombato A."/>
            <person name="Apweiler R."/>
            <person name="Aturaliya R.N."/>
            <person name="Bailey T.L."/>
            <person name="Bansal M."/>
            <person name="Baxter L."/>
            <person name="Beisel K.W."/>
            <person name="Bersano T."/>
            <person name="Bono H."/>
            <person name="Chalk A.M."/>
            <person name="Chiu K.P."/>
            <person name="Choudhary V."/>
            <person name="Christoffels A."/>
            <person name="Clutterbuck D.R."/>
            <person name="Crowe M.L."/>
            <person name="Dalla E."/>
            <person name="Dalrymple B.P."/>
            <person name="de Bono B."/>
            <person name="Della Gatta G."/>
            <person name="di Bernardo D."/>
            <person name="Down T."/>
            <person name="Engstrom P."/>
            <person name="Fagiolini M."/>
            <person name="Faulkner G."/>
            <person name="Fletcher C.F."/>
            <person name="Fukushima T."/>
            <person name="Furuno M."/>
            <person name="Futaki S."/>
            <person name="Gariboldi M."/>
            <person name="Georgii-Hemming P."/>
            <person name="Gingeras T.R."/>
            <person name="Gojobori T."/>
            <person name="Green R.E."/>
            <person name="Gustincich S."/>
            <person name="Harbers M."/>
            <person name="Hayashi Y."/>
            <person name="Hensch T.K."/>
            <person name="Hirokawa N."/>
            <person name="Hill D."/>
            <person name="Huminiecki L."/>
            <person name="Iacono M."/>
            <person name="Ikeo K."/>
            <person name="Iwama A."/>
            <person name="Ishikawa T."/>
            <person name="Jakt M."/>
            <person name="Kanapin A."/>
            <person name="Katoh M."/>
            <person name="Kawasawa Y."/>
            <person name="Kelso J."/>
            <person name="Kitamura H."/>
            <person name="Kitano H."/>
            <person name="Kollias G."/>
            <person name="Krishnan S.P."/>
            <person name="Kruger A."/>
            <person name="Kummerfeld S.K."/>
            <person name="Kurochkin I.V."/>
            <person name="Lareau L.F."/>
            <person name="Lazarevic D."/>
            <person name="Lipovich L."/>
            <person name="Liu J."/>
            <person name="Liuni S."/>
            <person name="McWilliam S."/>
            <person name="Madan Babu M."/>
            <person name="Madera M."/>
            <person name="Marchionni L."/>
            <person name="Matsuda H."/>
            <person name="Matsuzawa S."/>
            <person name="Miki H."/>
            <person name="Mignone F."/>
            <person name="Miyake S."/>
            <person name="Morris K."/>
            <person name="Mottagui-Tabar S."/>
            <person name="Mulder N."/>
            <person name="Nakano N."/>
            <person name="Nakauchi H."/>
            <person name="Ng P."/>
            <person name="Nilsson R."/>
            <person name="Nishiguchi S."/>
            <person name="Nishikawa S."/>
            <person name="Nori F."/>
            <person name="Ohara O."/>
            <person name="Okazaki Y."/>
            <person name="Orlando V."/>
            <person name="Pang K.C."/>
            <person name="Pavan W.J."/>
            <person name="Pavesi G."/>
            <person name="Pesole G."/>
            <person name="Petrovsky N."/>
            <person name="Piazza S."/>
            <person name="Reed J."/>
            <person name="Reid J.F."/>
            <person name="Ring B.Z."/>
            <person name="Ringwald M."/>
            <person name="Rost B."/>
            <person name="Ruan Y."/>
            <person name="Salzberg S.L."/>
            <person name="Sandelin A."/>
            <person name="Schneider C."/>
            <person name="Schoenbach C."/>
            <person name="Sekiguchi K."/>
            <person name="Semple C.A."/>
            <person name="Seno S."/>
            <person name="Sessa L."/>
            <person name="Sheng Y."/>
            <person name="Shibata Y."/>
            <person name="Shimada H."/>
            <person name="Shimada K."/>
            <person name="Silva D."/>
            <person name="Sinclair B."/>
            <person name="Sperling S."/>
            <person name="Stupka E."/>
            <person name="Sugiura K."/>
            <person name="Sultana R."/>
            <person name="Takenaka Y."/>
            <person name="Taki K."/>
            <person name="Tammoja K."/>
            <person name="Tan S.L."/>
            <person name="Tang S."/>
            <person name="Taylor M.S."/>
            <person name="Tegner J."/>
            <person name="Teichmann S.A."/>
            <person name="Ueda H.R."/>
            <person name="van Nimwegen E."/>
            <person name="Verardo R."/>
            <person name="Wei C.L."/>
            <person name="Yagi K."/>
            <person name="Yamanishi H."/>
            <person name="Zabarovsky E."/>
            <person name="Zhu S."/>
            <person name="Zimmer A."/>
            <person name="Hide W."/>
            <person name="Bult C."/>
            <person name="Grimmond S.M."/>
            <person name="Teasdale R.D."/>
            <person name="Liu E.T."/>
            <person name="Brusic V."/>
            <person name="Quackenbush J."/>
            <person name="Wahlestedt C."/>
            <person name="Mattick J.S."/>
            <person name="Hume D.A."/>
            <person name="Kai C."/>
            <person name="Sasaki D."/>
            <person name="Tomaru Y."/>
            <person name="Fukuda S."/>
            <person name="Kanamori-Katayama M."/>
            <person name="Suzuki M."/>
            <person name="Aoki J."/>
            <person name="Arakawa T."/>
            <person name="Iida J."/>
            <person name="Imamura K."/>
            <person name="Itoh M."/>
            <person name="Kato T."/>
            <person name="Kawaji H."/>
            <person name="Kawagashira N."/>
            <person name="Kawashima T."/>
            <person name="Kojima M."/>
            <person name="Kondo S."/>
            <person name="Konno H."/>
            <person name="Nakano K."/>
            <person name="Ninomiya N."/>
            <person name="Nishio T."/>
            <person name="Okada M."/>
            <person name="Plessy C."/>
            <person name="Shibata K."/>
            <person name="Shiraki T."/>
            <person name="Suzuki S."/>
            <person name="Tagami M."/>
            <person name="Waki K."/>
            <person name="Watahiki A."/>
            <person name="Okamura-Oho Y."/>
            <person name="Suzuki H."/>
            <person name="Kawai J."/>
            <person name="Hayashizaki Y."/>
        </authorList>
    </citation>
    <scope>NUCLEOTIDE SEQUENCE [LARGE SCALE MRNA]</scope>
    <source>
        <strain>C57BL/6J</strain>
        <tissue>Bone marrow</tissue>
        <tissue>Embryo</tissue>
        <tissue>Olfactory bulb</tissue>
        <tissue>Spleen</tissue>
        <tissue>Testis</tissue>
    </source>
</reference>
<reference key="2">
    <citation type="journal article" date="2004" name="Genome Res.">
        <title>The status, quality, and expansion of the NIH full-length cDNA project: the Mammalian Gene Collection (MGC).</title>
        <authorList>
            <consortium name="The MGC Project Team"/>
        </authorList>
    </citation>
    <scope>NUCLEOTIDE SEQUENCE [LARGE SCALE MRNA]</scope>
    <source>
        <strain>Czech II</strain>
        <tissue>Mammary tumor</tissue>
    </source>
</reference>
<reference key="3">
    <citation type="journal article" date="2003" name="J. Biol. Chem.">
        <title>Transcription initiation factor IID-interactive histone chaperone CIA-II implicated in mammalian spermatogenesis.</title>
        <authorList>
            <person name="Umehara T."/>
            <person name="Horikoshi M."/>
        </authorList>
    </citation>
    <scope>FUNCTION</scope>
    <scope>TISSUE SPECIFICITY</scope>
</reference>
<reference key="4">
    <citation type="journal article" date="2006" name="BMC Mol. Biol.">
        <title>TLK1B promotes repair of UV-damaged DNA through chromatin remodeling by Asf1.</title>
        <authorList>
            <person name="Sen S.P."/>
            <person name="De Benedetti A."/>
        </authorList>
    </citation>
    <scope>FUNCTION</scope>
    <scope>PHOSPHORYLATION BY TLK1</scope>
</reference>
<reference key="5">
    <citation type="journal article" date="2010" name="Cell">
        <title>A tissue-specific atlas of mouse protein phosphorylation and expression.</title>
        <authorList>
            <person name="Huttlin E.L."/>
            <person name="Jedrychowski M.P."/>
            <person name="Elias J.E."/>
            <person name="Goswami T."/>
            <person name="Rad R."/>
            <person name="Beausoleil S.A."/>
            <person name="Villen J."/>
            <person name="Haas W."/>
            <person name="Sowa M.E."/>
            <person name="Gygi S.P."/>
        </authorList>
    </citation>
    <scope>IDENTIFICATION BY MASS SPECTROMETRY [LARGE SCALE ANALYSIS]</scope>
    <source>
        <tissue>Spleen</tissue>
        <tissue>Testis</tissue>
    </source>
</reference>
<reference key="6">
    <citation type="journal article" date="2016" name="Reproduction">
        <title>Loss of the histone chaperone ASF1B reduces female reproductive capacity in mice.</title>
        <authorList>
            <person name="Messiaen S."/>
            <person name="Guiard J."/>
            <person name="Aigueperse C."/>
            <person name="Fliniaux I."/>
            <person name="Tourpin S."/>
            <person name="Barroca V."/>
            <person name="Allemand I."/>
            <person name="Fouchet P."/>
            <person name="Livera G."/>
            <person name="Vernet M."/>
        </authorList>
    </citation>
    <scope>FUNCTION</scope>
    <scope>TISSUE SPECIFICITY</scope>
    <scope>DEVELOPMENTAL STAGE</scope>
    <scope>DISRUPTION PHENOTYPE</scope>
</reference>
<accession>Q9DAP7</accession>
<accession>Q8BP41</accession>
<accession>Q9CTX3</accession>
<protein>
    <recommendedName>
        <fullName evidence="7">Histone chaperone ASF1B</fullName>
    </recommendedName>
    <alternativeName>
        <fullName>Anti-silencing function protein 1 homolog B</fullName>
    </alternativeName>
    <alternativeName>
        <fullName evidence="6">CCG1-interacting factor A-II</fullName>
        <shortName evidence="6">CIA-II</shortName>
        <shortName evidence="6">mCIA-II</shortName>
    </alternativeName>
</protein>
<gene>
    <name evidence="6 8" type="primary">Asf1b</name>
</gene>
<keyword id="KW-0143">Chaperone</keyword>
<keyword id="KW-0156">Chromatin regulator</keyword>
<keyword id="KW-0963">Cytoplasm</keyword>
<keyword id="KW-0539">Nucleus</keyword>
<keyword id="KW-0597">Phosphoprotein</keyword>
<keyword id="KW-1185">Reference proteome</keyword>
<keyword id="KW-0804">Transcription</keyword>
<keyword id="KW-0805">Transcription regulation</keyword>
<sequence length="202" mass="22464">MAKVSVLNVAVLENPSPFHSPFRFEISFECSEALSDDLEWKIIYVGSAESEEFDQILDSVLVGPVPAGRHMFVFQADAPNPSLIPETDAVGVTVVLITCTYHGQEFIRVGYYVNNEYPDPELRENPPPKPDFSQLQRNILASNPRVTRFHINWDNNPDSLEAIENQDPNVDFSLSLSCTPVKSLGLPSCIPGLLPENSMDCI</sequence>
<name>ASF1B_MOUSE</name>